<feature type="chain" id="PRO_1000017723" description="L-rhamnose isomerase">
    <location>
        <begin position="1"/>
        <end position="419"/>
    </location>
</feature>
<feature type="binding site" evidence="1">
    <location>
        <position position="262"/>
    </location>
    <ligand>
        <name>Mn(2+)</name>
        <dbReference type="ChEBI" id="CHEBI:29035"/>
    </ligand>
</feature>
<feature type="binding site" evidence="1">
    <location>
        <position position="294"/>
    </location>
    <ligand>
        <name>Mn(2+)</name>
        <dbReference type="ChEBI" id="CHEBI:29035"/>
    </ligand>
</feature>
<feature type="binding site" evidence="1">
    <location>
        <position position="296"/>
    </location>
    <ligand>
        <name>Mn(2+)</name>
        <dbReference type="ChEBI" id="CHEBI:29035"/>
    </ligand>
</feature>
<name>RHAA_SHISS</name>
<evidence type="ECO:0000255" key="1">
    <source>
        <dbReference type="HAMAP-Rule" id="MF_00541"/>
    </source>
</evidence>
<keyword id="KW-0963">Cytoplasm</keyword>
<keyword id="KW-0413">Isomerase</keyword>
<keyword id="KW-0464">Manganese</keyword>
<keyword id="KW-0479">Metal-binding</keyword>
<keyword id="KW-1185">Reference proteome</keyword>
<keyword id="KW-0684">Rhamnose metabolism</keyword>
<dbReference type="EC" id="5.3.1.14" evidence="1"/>
<dbReference type="EMBL" id="CP000038">
    <property type="protein sequence ID" value="AAZ90589.1"/>
    <property type="molecule type" value="Genomic_DNA"/>
</dbReference>
<dbReference type="RefSeq" id="WP_000211484.1">
    <property type="nucleotide sequence ID" value="NC_007384.1"/>
</dbReference>
<dbReference type="SMR" id="Q3YV73"/>
<dbReference type="KEGG" id="ssn:SSON_4073"/>
<dbReference type="HOGENOM" id="CLU_052790_0_0_6"/>
<dbReference type="UniPathway" id="UPA00541">
    <property type="reaction ID" value="UER00601"/>
</dbReference>
<dbReference type="Proteomes" id="UP000002529">
    <property type="component" value="Chromosome"/>
</dbReference>
<dbReference type="GO" id="GO:0005737">
    <property type="term" value="C:cytoplasm"/>
    <property type="evidence" value="ECO:0007669"/>
    <property type="project" value="UniProtKB-SubCell"/>
</dbReference>
<dbReference type="GO" id="GO:0008740">
    <property type="term" value="F:L-rhamnose isomerase activity"/>
    <property type="evidence" value="ECO:0007669"/>
    <property type="project" value="UniProtKB-UniRule"/>
</dbReference>
<dbReference type="GO" id="GO:0030145">
    <property type="term" value="F:manganese ion binding"/>
    <property type="evidence" value="ECO:0007669"/>
    <property type="project" value="UniProtKB-UniRule"/>
</dbReference>
<dbReference type="GO" id="GO:0019324">
    <property type="term" value="P:L-lyxose metabolic process"/>
    <property type="evidence" value="ECO:0007669"/>
    <property type="project" value="TreeGrafter"/>
</dbReference>
<dbReference type="GO" id="GO:0019301">
    <property type="term" value="P:rhamnose catabolic process"/>
    <property type="evidence" value="ECO:0007669"/>
    <property type="project" value="UniProtKB-UniRule"/>
</dbReference>
<dbReference type="FunFam" id="3.20.20.150:FF:000006">
    <property type="entry name" value="L-rhamnose isomerase"/>
    <property type="match status" value="1"/>
</dbReference>
<dbReference type="Gene3D" id="3.20.20.150">
    <property type="entry name" value="Divalent-metal-dependent TIM barrel enzymes"/>
    <property type="match status" value="1"/>
</dbReference>
<dbReference type="HAMAP" id="MF_00541">
    <property type="entry name" value="RhaA"/>
    <property type="match status" value="1"/>
</dbReference>
<dbReference type="InterPro" id="IPR050337">
    <property type="entry name" value="L-rhamnose_isomerase"/>
</dbReference>
<dbReference type="InterPro" id="IPR009308">
    <property type="entry name" value="Rhamnose_isomerase"/>
</dbReference>
<dbReference type="InterPro" id="IPR036237">
    <property type="entry name" value="Xyl_isomerase-like_sf"/>
</dbReference>
<dbReference type="NCBIfam" id="NF002203">
    <property type="entry name" value="PRK01076.1"/>
    <property type="match status" value="1"/>
</dbReference>
<dbReference type="NCBIfam" id="TIGR01748">
    <property type="entry name" value="rhaA"/>
    <property type="match status" value="1"/>
</dbReference>
<dbReference type="PANTHER" id="PTHR30268">
    <property type="entry name" value="L-RHAMNOSE ISOMERASE"/>
    <property type="match status" value="1"/>
</dbReference>
<dbReference type="PANTHER" id="PTHR30268:SF0">
    <property type="entry name" value="L-RHAMNOSE ISOMERASE"/>
    <property type="match status" value="1"/>
</dbReference>
<dbReference type="Pfam" id="PF06134">
    <property type="entry name" value="RhaA"/>
    <property type="match status" value="1"/>
</dbReference>
<dbReference type="SUPFAM" id="SSF51658">
    <property type="entry name" value="Xylose isomerase-like"/>
    <property type="match status" value="1"/>
</dbReference>
<protein>
    <recommendedName>
        <fullName evidence="1">L-rhamnose isomerase</fullName>
        <ecNumber evidence="1">5.3.1.14</ecNumber>
    </recommendedName>
</protein>
<proteinExistence type="inferred from homology"/>
<accession>Q3YV73</accession>
<gene>
    <name evidence="1" type="primary">rhaA</name>
    <name type="ordered locus">SSON_4073</name>
</gene>
<organism>
    <name type="scientific">Shigella sonnei (strain Ss046)</name>
    <dbReference type="NCBI Taxonomy" id="300269"/>
    <lineage>
        <taxon>Bacteria</taxon>
        <taxon>Pseudomonadati</taxon>
        <taxon>Pseudomonadota</taxon>
        <taxon>Gammaproteobacteria</taxon>
        <taxon>Enterobacterales</taxon>
        <taxon>Enterobacteriaceae</taxon>
        <taxon>Shigella</taxon>
    </lineage>
</organism>
<comment type="function">
    <text evidence="1">Catalyzes the interconversion of L-rhamnose and L-rhamnulose.</text>
</comment>
<comment type="catalytic activity">
    <reaction evidence="1">
        <text>L-rhamnopyranose = L-rhamnulose</text>
        <dbReference type="Rhea" id="RHEA:23160"/>
        <dbReference type="ChEBI" id="CHEBI:17897"/>
        <dbReference type="ChEBI" id="CHEBI:62346"/>
        <dbReference type="EC" id="5.3.1.14"/>
    </reaction>
</comment>
<comment type="cofactor">
    <cofactor evidence="1">
        <name>Mn(2+)</name>
        <dbReference type="ChEBI" id="CHEBI:29035"/>
    </cofactor>
    <text evidence="1">Binds 1 Mn(2+) ion per subunit.</text>
</comment>
<comment type="pathway">
    <text evidence="1">Carbohydrate degradation; L-rhamnose degradation; glycerone phosphate from L-rhamnose: step 1/3.</text>
</comment>
<comment type="subunit">
    <text evidence="1">Homotetramer.</text>
</comment>
<comment type="subcellular location">
    <subcellularLocation>
        <location evidence="1">Cytoplasm</location>
    </subcellularLocation>
</comment>
<comment type="similarity">
    <text evidence="1">Belongs to the rhamnose isomerase family.</text>
</comment>
<reference key="1">
    <citation type="journal article" date="2005" name="Nucleic Acids Res.">
        <title>Genome dynamics and diversity of Shigella species, the etiologic agents of bacillary dysentery.</title>
        <authorList>
            <person name="Yang F."/>
            <person name="Yang J."/>
            <person name="Zhang X."/>
            <person name="Chen L."/>
            <person name="Jiang Y."/>
            <person name="Yan Y."/>
            <person name="Tang X."/>
            <person name="Wang J."/>
            <person name="Xiong Z."/>
            <person name="Dong J."/>
            <person name="Xue Y."/>
            <person name="Zhu Y."/>
            <person name="Xu X."/>
            <person name="Sun L."/>
            <person name="Chen S."/>
            <person name="Nie H."/>
            <person name="Peng J."/>
            <person name="Xu J."/>
            <person name="Wang Y."/>
            <person name="Yuan Z."/>
            <person name="Wen Y."/>
            <person name="Yao Z."/>
            <person name="Shen Y."/>
            <person name="Qiang B."/>
            <person name="Hou Y."/>
            <person name="Yu J."/>
            <person name="Jin Q."/>
        </authorList>
    </citation>
    <scope>NUCLEOTIDE SEQUENCE [LARGE SCALE GENOMIC DNA]</scope>
    <source>
        <strain>Ss046</strain>
    </source>
</reference>
<sequence length="419" mass="47152">MTTQLEQAWELAKQRFAAVGIDVEEALRQLDRLPVSMHCWQGDDVSGFENPEGSLTGGIQAIGNYPGKARNASELRADLEQAMRLIPGPKRLNLHAIYLESDTPVSRDQIKPEHFKNWVEWAKANQLGLDFNPSCFSHPLSADGFTLSHPDDSIRQFWIDHCKASRRVSAYFGEQLGTPSVMNIWIPDGMKDITVDRLAPRQRLLAALDEVISEKLDPAHHIDAVESKLFGIGAESYTVGSNEFYMGYATSRQTALCLDAGHFHPTEVISDKISAAMLYVPQLLLHVSRPVRWDSDHVVLLDDETQAIASEIVRHDLFDRVHIGLDFFDASINRIAAWVIGTRNMKKALLRALLEPTAELRKLEAAGDYTARLALLEEQKSLPWQAVWEMYCQRHDTPAGSEWLESVRAYEKAILSQRG</sequence>